<dbReference type="EMBL" id="KC257461">
    <property type="protein sequence ID" value="AGF36987.1"/>
    <property type="molecule type" value="Genomic_DNA"/>
</dbReference>
<dbReference type="EMBL" id="MT903340">
    <property type="protein sequence ID" value="QNP12953.1"/>
    <property type="molecule type" value="Genomic_DNA"/>
</dbReference>
<dbReference type="RefSeq" id="NP_536510.1">
    <property type="nucleotide sequence ID" value="NC_003310.1"/>
</dbReference>
<dbReference type="RefSeq" id="YP_010377080.1">
    <property type="nucleotide sequence ID" value="NC_063383.1"/>
</dbReference>
<dbReference type="PDB" id="9KR6">
    <property type="method" value="EM"/>
    <property type="resolution" value="2.77 A"/>
    <property type="chains" value="C/D=9-18"/>
</dbReference>
<dbReference type="PDBsum" id="9KR6"/>
<dbReference type="EMDB" id="EMD-62520"/>
<dbReference type="GeneID" id="72551493"/>
<dbReference type="GeneID" id="928943"/>
<dbReference type="KEGG" id="vg:928943"/>
<dbReference type="Proteomes" id="UP000516359">
    <property type="component" value="Genome"/>
</dbReference>
<dbReference type="GO" id="GO:0030430">
    <property type="term" value="C:host cell cytoplasm"/>
    <property type="evidence" value="ECO:0007669"/>
    <property type="project" value="UniProtKB-SubCell"/>
</dbReference>
<dbReference type="GO" id="GO:0019028">
    <property type="term" value="C:viral capsid"/>
    <property type="evidence" value="ECO:0007669"/>
    <property type="project" value="InterPro"/>
</dbReference>
<dbReference type="GO" id="GO:0005198">
    <property type="term" value="F:structural molecule activity"/>
    <property type="evidence" value="ECO:0007669"/>
    <property type="project" value="InterPro"/>
</dbReference>
<dbReference type="InterPro" id="IPR007586">
    <property type="entry name" value="VP8_pox_nuc-bd"/>
</dbReference>
<dbReference type="Pfam" id="PF04498">
    <property type="entry name" value="Pox_VP8_L4R"/>
    <property type="match status" value="1"/>
</dbReference>
<keyword id="KW-0002">3D-structure</keyword>
<keyword id="KW-1035">Host cytoplasm</keyword>
<keyword id="KW-0426">Late protein</keyword>
<keyword id="KW-1185">Reference proteome</keyword>
<keyword id="KW-0946">Virion</keyword>
<sequence>MSLLLENLIEEDTIFFAGSISEYDDLQMVIAGAKSKFPRSMLSIFNIVPRTMSKYELELIHNENITGAMFTTMYNIRNNLGLGDDKLTIEAIENYFLDPNNEVMPLIINNTDMTTVIPKKSGRRKNKNMVIFRQGSSPILCIFETRKKINIYKENMESVSTEYTPIGDNKALISKYAGINILNVYSPSTSMRLNAIYGFTNKNKLEKLSTNKELESYSSSPLQEPIRLNDFLGLLECVKKNIPLTDIPTKD</sequence>
<reference key="1">
    <citation type="journal article" date="2013" name="Am. J. Trop. Med. Hyg.">
        <title>Detection of human monkeypox in the republic of the congo following intensive community education.</title>
        <authorList>
            <person name="Reynolds M.G."/>
            <person name="Emerson G.L."/>
            <person name="Pukuta E."/>
            <person name="Karhemere S."/>
            <person name="Muyembe J.J."/>
            <person name="Bikindou A."/>
            <person name="McCollum A.M."/>
            <person name="Moses C."/>
            <person name="Wilkins K."/>
            <person name="Zhao H."/>
            <person name="Damon I.K."/>
            <person name="Karem K.L."/>
            <person name="Li Y."/>
            <person name="Carroll D.S."/>
            <person name="Mombouli J.V."/>
        </authorList>
    </citation>
    <scope>NUCLEOTIDE SEQUENCE</scope>
    <source>
        <strain>ROC2010</strain>
    </source>
</reference>
<reference key="2">
    <citation type="journal article" date="2022" name="J. Infect. Dis.">
        <title>Exportation of Monkeypox virus from the African continent.</title>
        <authorList>
            <person name="Mauldin M.R."/>
            <person name="McCollum A.M."/>
            <person name="Nakazawa Y.J."/>
            <person name="Mandra A."/>
            <person name="Whitehouse E.R."/>
            <person name="Davidson W."/>
            <person name="Zhao H."/>
            <person name="Gao J."/>
            <person name="Li Y."/>
            <person name="Doty J."/>
            <person name="Yinka-Ogunleye A."/>
            <person name="Akinpelu A."/>
            <person name="Aruna O."/>
            <person name="Naidoo D."/>
            <person name="Lewandowski K."/>
            <person name="Afrough B."/>
            <person name="Graham V."/>
            <person name="Aarons E."/>
            <person name="Hewson R."/>
            <person name="Vipond R."/>
            <person name="Dunning J."/>
            <person name="Chand M."/>
            <person name="Brown C."/>
            <person name="Cohen-Gihon I."/>
            <person name="Erez N."/>
            <person name="Shifman O."/>
            <person name="Israeli O."/>
            <person name="Sharon M."/>
            <person name="Schwartz E."/>
            <person name="Beth-Din A."/>
            <person name="Zvi A."/>
            <person name="Mak T.M."/>
            <person name="Ng Y.K."/>
            <person name="Cui L."/>
            <person name="Lin R.T.P."/>
            <person name="Olson V.A."/>
            <person name="Brooks T."/>
            <person name="Paran N."/>
            <person name="Ihekweazu C."/>
            <person name="Reynolds M.G."/>
        </authorList>
    </citation>
    <scope>NUCLEOTIDE SEQUENCE [LARGE SCALE GENOMIC DNA]</scope>
    <source>
        <strain>MPXV-M5312_HM12_Rivers</strain>
    </source>
</reference>
<evidence type="ECO:0000250" key="1">
    <source>
        <dbReference type="UniProtKB" id="P03295"/>
    </source>
</evidence>
<evidence type="ECO:0000305" key="2"/>
<protein>
    <recommendedName>
        <fullName>Core protein VP8</fullName>
    </recommendedName>
</protein>
<organism>
    <name type="scientific">Monkeypox virus</name>
    <dbReference type="NCBI Taxonomy" id="10244"/>
    <lineage>
        <taxon>Viruses</taxon>
        <taxon>Varidnaviria</taxon>
        <taxon>Bamfordvirae</taxon>
        <taxon>Nucleocytoviricota</taxon>
        <taxon>Pokkesviricetes</taxon>
        <taxon>Chitovirales</taxon>
        <taxon>Poxviridae</taxon>
        <taxon>Chordopoxvirinae</taxon>
        <taxon>Orthopoxvirus</taxon>
    </lineage>
</organism>
<organismHost>
    <name type="scientific">Cynomys gunnisoni</name>
    <name type="common">Gunnison's prairie dog</name>
    <name type="synonym">Spermophilus gunnisoni</name>
    <dbReference type="NCBI Taxonomy" id="45479"/>
</organismHost>
<organismHost>
    <name type="scientific">Cynomys leucurus</name>
    <name type="common">White-tailed prairie dog</name>
    <dbReference type="NCBI Taxonomy" id="99825"/>
</organismHost>
<organismHost>
    <name type="scientific">Cynomys ludovicianus</name>
    <name type="common">Black-tailed prairie dog</name>
    <dbReference type="NCBI Taxonomy" id="45480"/>
</organismHost>
<organismHost>
    <name type="scientific">Cynomys mexicanus</name>
    <name type="common">Mexican prairie dog</name>
    <dbReference type="NCBI Taxonomy" id="99826"/>
</organismHost>
<organismHost>
    <name type="scientific">Cynomys parvidens</name>
    <name type="common">Utah prairie dog</name>
    <dbReference type="NCBI Taxonomy" id="99827"/>
</organismHost>
<organismHost>
    <name type="scientific">Gliridae</name>
    <name type="common">dormice</name>
    <dbReference type="NCBI Taxonomy" id="30650"/>
</organismHost>
<organismHost>
    <name type="scientific">Heliosciurus ruwenzorii</name>
    <name type="common">Ruwenzori sun squirrel</name>
    <dbReference type="NCBI Taxonomy" id="226685"/>
</organismHost>
<organismHost>
    <name type="scientific">Homo sapiens</name>
    <name type="common">Human</name>
    <dbReference type="NCBI Taxonomy" id="9606"/>
</organismHost>
<organismHost>
    <name type="scientific">Mus musculus</name>
    <name type="common">Mouse</name>
    <dbReference type="NCBI Taxonomy" id="10090"/>
</organismHost>
<comment type="function">
    <text evidence="1">Major core structural protein.</text>
</comment>
<comment type="subcellular location">
    <subcellularLocation>
        <location evidence="1">Virion</location>
    </subcellularLocation>
    <subcellularLocation>
        <location evidence="1">Host cytoplasm</location>
    </subcellularLocation>
    <text evidence="1">Localizes to the virion core.</text>
</comment>
<comment type="PTM">
    <text evidence="1">Undergoes morphogenesis-associated proteolysis which cleaves the 28 kDa to a 25-kDa product. Proteolytic cleavage of major core proteins P4a (OPG136), P4b (OPG129), and VP8 (OPG098), which occurs at a late stage of core formation, is required for production of infectious mature virions (MV).</text>
</comment>
<comment type="similarity">
    <text evidence="2">Belongs to the orthopoxvirus OPG098 family.</text>
</comment>
<feature type="propeptide" id="PRO_0000457677" description="Removed by core protease OPG083" evidence="1">
    <location>
        <begin position="1"/>
        <end position="32"/>
    </location>
</feature>
<feature type="chain" id="PRO_0000457678" description="Core protein VP8" evidence="1">
    <location>
        <begin position="33"/>
        <end position="251"/>
    </location>
</feature>
<feature type="site" description="Cleavage; by core protease OPG083" evidence="1">
    <location>
        <begin position="18"/>
        <end position="19"/>
    </location>
</feature>
<feature type="site" description="Cleavage; by core protease OPG083" evidence="1">
    <location>
        <begin position="32"/>
        <end position="33"/>
    </location>
</feature>
<accession>M1L511</accession>
<gene>
    <name type="primary">OPG098</name>
    <name type="ORF">MPXVgp083</name>
</gene>
<name>VP8_MONPV</name>
<proteinExistence type="evidence at protein level"/>